<proteinExistence type="inferred from homology"/>
<dbReference type="EC" id="4.2.1.59" evidence="1"/>
<dbReference type="EMBL" id="CP000849">
    <property type="protein sequence ID" value="ABV78660.1"/>
    <property type="molecule type" value="Genomic_DNA"/>
</dbReference>
<dbReference type="RefSeq" id="WP_012151604.1">
    <property type="nucleotide sequence ID" value="NC_009883.1"/>
</dbReference>
<dbReference type="SMR" id="A8GUZ3"/>
<dbReference type="KEGG" id="rbo:A1I_01340"/>
<dbReference type="HOGENOM" id="CLU_078912_1_2_5"/>
<dbReference type="GO" id="GO:0005737">
    <property type="term" value="C:cytoplasm"/>
    <property type="evidence" value="ECO:0007669"/>
    <property type="project" value="UniProtKB-SubCell"/>
</dbReference>
<dbReference type="GO" id="GO:0016020">
    <property type="term" value="C:membrane"/>
    <property type="evidence" value="ECO:0007669"/>
    <property type="project" value="GOC"/>
</dbReference>
<dbReference type="GO" id="GO:0019171">
    <property type="term" value="F:(3R)-hydroxyacyl-[acyl-carrier-protein] dehydratase activity"/>
    <property type="evidence" value="ECO:0007669"/>
    <property type="project" value="UniProtKB-EC"/>
</dbReference>
<dbReference type="GO" id="GO:0006633">
    <property type="term" value="P:fatty acid biosynthetic process"/>
    <property type="evidence" value="ECO:0007669"/>
    <property type="project" value="UniProtKB-UniRule"/>
</dbReference>
<dbReference type="GO" id="GO:0009245">
    <property type="term" value="P:lipid A biosynthetic process"/>
    <property type="evidence" value="ECO:0007669"/>
    <property type="project" value="UniProtKB-UniRule"/>
</dbReference>
<dbReference type="CDD" id="cd01288">
    <property type="entry name" value="FabZ"/>
    <property type="match status" value="1"/>
</dbReference>
<dbReference type="FunFam" id="3.10.129.10:FF:000001">
    <property type="entry name" value="3-hydroxyacyl-[acyl-carrier-protein] dehydratase FabZ"/>
    <property type="match status" value="1"/>
</dbReference>
<dbReference type="Gene3D" id="3.10.129.10">
    <property type="entry name" value="Hotdog Thioesterase"/>
    <property type="match status" value="1"/>
</dbReference>
<dbReference type="HAMAP" id="MF_00406">
    <property type="entry name" value="FabZ"/>
    <property type="match status" value="1"/>
</dbReference>
<dbReference type="InterPro" id="IPR013114">
    <property type="entry name" value="FabA_FabZ"/>
</dbReference>
<dbReference type="InterPro" id="IPR010084">
    <property type="entry name" value="FabZ"/>
</dbReference>
<dbReference type="InterPro" id="IPR029069">
    <property type="entry name" value="HotDog_dom_sf"/>
</dbReference>
<dbReference type="NCBIfam" id="TIGR01750">
    <property type="entry name" value="fabZ"/>
    <property type="match status" value="1"/>
</dbReference>
<dbReference type="NCBIfam" id="NF000582">
    <property type="entry name" value="PRK00006.1"/>
    <property type="match status" value="1"/>
</dbReference>
<dbReference type="PANTHER" id="PTHR30272">
    <property type="entry name" value="3-HYDROXYACYL-[ACYL-CARRIER-PROTEIN] DEHYDRATASE"/>
    <property type="match status" value="1"/>
</dbReference>
<dbReference type="PANTHER" id="PTHR30272:SF1">
    <property type="entry name" value="3-HYDROXYACYL-[ACYL-CARRIER-PROTEIN] DEHYDRATASE"/>
    <property type="match status" value="1"/>
</dbReference>
<dbReference type="Pfam" id="PF07977">
    <property type="entry name" value="FabA"/>
    <property type="match status" value="1"/>
</dbReference>
<dbReference type="SUPFAM" id="SSF54637">
    <property type="entry name" value="Thioesterase/thiol ester dehydrase-isomerase"/>
    <property type="match status" value="1"/>
</dbReference>
<evidence type="ECO:0000255" key="1">
    <source>
        <dbReference type="HAMAP-Rule" id="MF_00406"/>
    </source>
</evidence>
<gene>
    <name evidence="1" type="primary">fabZ</name>
    <name type="ordered locus">A1I_01340</name>
</gene>
<accession>A8GUZ3</accession>
<reference key="1">
    <citation type="submission" date="2007-09" db="EMBL/GenBank/DDBJ databases">
        <title>Complete genome sequencing of Rickettsia bellii.</title>
        <authorList>
            <person name="Madan A."/>
            <person name="Lee H."/>
            <person name="Madan A."/>
            <person name="Yoon J.-G."/>
            <person name="Ryu G.-Y."/>
            <person name="Dasch G."/>
            <person name="Ereemeva M."/>
        </authorList>
    </citation>
    <scope>NUCLEOTIDE SEQUENCE [LARGE SCALE GENOMIC DNA]</scope>
    <source>
        <strain>OSU 85-389</strain>
    </source>
</reference>
<keyword id="KW-0963">Cytoplasm</keyword>
<keyword id="KW-0441">Lipid A biosynthesis</keyword>
<keyword id="KW-0444">Lipid biosynthesis</keyword>
<keyword id="KW-0443">Lipid metabolism</keyword>
<keyword id="KW-0456">Lyase</keyword>
<organism>
    <name type="scientific">Rickettsia bellii (strain OSU 85-389)</name>
    <dbReference type="NCBI Taxonomy" id="391896"/>
    <lineage>
        <taxon>Bacteria</taxon>
        <taxon>Pseudomonadati</taxon>
        <taxon>Pseudomonadota</taxon>
        <taxon>Alphaproteobacteria</taxon>
        <taxon>Rickettsiales</taxon>
        <taxon>Rickettsiaceae</taxon>
        <taxon>Rickettsieae</taxon>
        <taxon>Rickettsia</taxon>
        <taxon>belli group</taxon>
    </lineage>
</organism>
<feature type="chain" id="PRO_1000049857" description="3-hydroxyacyl-[acyl-carrier-protein] dehydratase FabZ">
    <location>
        <begin position="1"/>
        <end position="145"/>
    </location>
</feature>
<feature type="active site" evidence="1">
    <location>
        <position position="49"/>
    </location>
</feature>
<name>FABZ_RICB8</name>
<sequence length="145" mass="16157">MTIDITEIMDLIPHRYPFLLVDKVVEIDPNKSITGIKNVTVNEPQFTGHFPARPVMPGVLMVEAMTQLAAILVAKSLGSTKNKEVFLMAIENSKFRKVVQPGDTMHIHATIDQQRANVWKFSSTVKVDGEMAAESKFTAMIKDKS</sequence>
<protein>
    <recommendedName>
        <fullName evidence="1">3-hydroxyacyl-[acyl-carrier-protein] dehydratase FabZ</fullName>
        <ecNumber evidence="1">4.2.1.59</ecNumber>
    </recommendedName>
    <alternativeName>
        <fullName evidence="1">(3R)-hydroxymyristoyl-[acyl-carrier-protein] dehydratase</fullName>
        <shortName evidence="1">(3R)-hydroxymyristoyl-ACP dehydrase</shortName>
    </alternativeName>
    <alternativeName>
        <fullName evidence="1">Beta-hydroxyacyl-ACP dehydratase</fullName>
    </alternativeName>
</protein>
<comment type="function">
    <text evidence="1">Involved in unsaturated fatty acids biosynthesis. Catalyzes the dehydration of short chain beta-hydroxyacyl-ACPs and long chain saturated and unsaturated beta-hydroxyacyl-ACPs.</text>
</comment>
<comment type="catalytic activity">
    <reaction evidence="1">
        <text>a (3R)-hydroxyacyl-[ACP] = a (2E)-enoyl-[ACP] + H2O</text>
        <dbReference type="Rhea" id="RHEA:13097"/>
        <dbReference type="Rhea" id="RHEA-COMP:9925"/>
        <dbReference type="Rhea" id="RHEA-COMP:9945"/>
        <dbReference type="ChEBI" id="CHEBI:15377"/>
        <dbReference type="ChEBI" id="CHEBI:78784"/>
        <dbReference type="ChEBI" id="CHEBI:78827"/>
        <dbReference type="EC" id="4.2.1.59"/>
    </reaction>
</comment>
<comment type="subcellular location">
    <subcellularLocation>
        <location evidence="1">Cytoplasm</location>
    </subcellularLocation>
</comment>
<comment type="similarity">
    <text evidence="1">Belongs to the thioester dehydratase family. FabZ subfamily.</text>
</comment>